<organism>
    <name type="scientific">Edwardsiella ictaluri (strain 93-146)</name>
    <dbReference type="NCBI Taxonomy" id="634503"/>
    <lineage>
        <taxon>Bacteria</taxon>
        <taxon>Pseudomonadati</taxon>
        <taxon>Pseudomonadota</taxon>
        <taxon>Gammaproteobacteria</taxon>
        <taxon>Enterobacterales</taxon>
        <taxon>Hafniaceae</taxon>
        <taxon>Edwardsiella</taxon>
    </lineage>
</organism>
<feature type="chain" id="PRO_1000205152" description="Ferrochelatase">
    <location>
        <begin position="1"/>
        <end position="322"/>
    </location>
</feature>
<feature type="binding site" evidence="1">
    <location>
        <position position="195"/>
    </location>
    <ligand>
        <name>Fe cation</name>
        <dbReference type="ChEBI" id="CHEBI:24875"/>
    </ligand>
</feature>
<feature type="binding site" evidence="1">
    <location>
        <position position="276"/>
    </location>
    <ligand>
        <name>Fe cation</name>
        <dbReference type="ChEBI" id="CHEBI:24875"/>
    </ligand>
</feature>
<proteinExistence type="inferred from homology"/>
<comment type="function">
    <text evidence="1">Catalyzes the ferrous insertion into protoporphyrin IX.</text>
</comment>
<comment type="catalytic activity">
    <reaction evidence="1">
        <text>heme b + 2 H(+) = protoporphyrin IX + Fe(2+)</text>
        <dbReference type="Rhea" id="RHEA:22584"/>
        <dbReference type="ChEBI" id="CHEBI:15378"/>
        <dbReference type="ChEBI" id="CHEBI:29033"/>
        <dbReference type="ChEBI" id="CHEBI:57306"/>
        <dbReference type="ChEBI" id="CHEBI:60344"/>
        <dbReference type="EC" id="4.98.1.1"/>
    </reaction>
</comment>
<comment type="pathway">
    <text evidence="1">Porphyrin-containing compound metabolism; protoheme biosynthesis; protoheme from protoporphyrin-IX: step 1/1.</text>
</comment>
<comment type="subcellular location">
    <subcellularLocation>
        <location evidence="1">Cytoplasm</location>
    </subcellularLocation>
</comment>
<comment type="similarity">
    <text evidence="1">Belongs to the ferrochelatase family.</text>
</comment>
<gene>
    <name evidence="1" type="primary">hemH</name>
    <name type="ordered locus">NT01EI_1124</name>
</gene>
<accession>C5BD17</accession>
<keyword id="KW-0963">Cytoplasm</keyword>
<keyword id="KW-0350">Heme biosynthesis</keyword>
<keyword id="KW-0408">Iron</keyword>
<keyword id="KW-0456">Lyase</keyword>
<keyword id="KW-0479">Metal-binding</keyword>
<keyword id="KW-0627">Porphyrin biosynthesis</keyword>
<name>HEMH_EDWI9</name>
<dbReference type="EC" id="4.98.1.1" evidence="1"/>
<dbReference type="EMBL" id="CP001600">
    <property type="protein sequence ID" value="ACR68335.1"/>
    <property type="molecule type" value="Genomic_DNA"/>
</dbReference>
<dbReference type="RefSeq" id="WP_015870512.1">
    <property type="nucleotide sequence ID" value="NZ_CP169062.1"/>
</dbReference>
<dbReference type="SMR" id="C5BD17"/>
<dbReference type="STRING" id="67780.B6E78_15995"/>
<dbReference type="GeneID" id="69538160"/>
<dbReference type="KEGG" id="eic:NT01EI_1124"/>
<dbReference type="PATRIC" id="fig|634503.3.peg.1022"/>
<dbReference type="HOGENOM" id="CLU_018884_0_0_6"/>
<dbReference type="OrthoDB" id="9809741at2"/>
<dbReference type="UniPathway" id="UPA00252">
    <property type="reaction ID" value="UER00325"/>
</dbReference>
<dbReference type="Proteomes" id="UP000001485">
    <property type="component" value="Chromosome"/>
</dbReference>
<dbReference type="GO" id="GO:0005737">
    <property type="term" value="C:cytoplasm"/>
    <property type="evidence" value="ECO:0007669"/>
    <property type="project" value="UniProtKB-SubCell"/>
</dbReference>
<dbReference type="GO" id="GO:0004325">
    <property type="term" value="F:ferrochelatase activity"/>
    <property type="evidence" value="ECO:0007669"/>
    <property type="project" value="UniProtKB-UniRule"/>
</dbReference>
<dbReference type="GO" id="GO:0046872">
    <property type="term" value="F:metal ion binding"/>
    <property type="evidence" value="ECO:0007669"/>
    <property type="project" value="UniProtKB-KW"/>
</dbReference>
<dbReference type="GO" id="GO:0006783">
    <property type="term" value="P:heme biosynthetic process"/>
    <property type="evidence" value="ECO:0007669"/>
    <property type="project" value="UniProtKB-UniRule"/>
</dbReference>
<dbReference type="CDD" id="cd00419">
    <property type="entry name" value="Ferrochelatase_C"/>
    <property type="match status" value="1"/>
</dbReference>
<dbReference type="CDD" id="cd03411">
    <property type="entry name" value="Ferrochelatase_N"/>
    <property type="match status" value="1"/>
</dbReference>
<dbReference type="FunFam" id="3.40.50.1400:FF:000002">
    <property type="entry name" value="Ferrochelatase"/>
    <property type="match status" value="1"/>
</dbReference>
<dbReference type="Gene3D" id="3.40.50.1400">
    <property type="match status" value="2"/>
</dbReference>
<dbReference type="HAMAP" id="MF_00323">
    <property type="entry name" value="Ferrochelatase"/>
    <property type="match status" value="1"/>
</dbReference>
<dbReference type="InterPro" id="IPR001015">
    <property type="entry name" value="Ferrochelatase"/>
</dbReference>
<dbReference type="InterPro" id="IPR019772">
    <property type="entry name" value="Ferrochelatase_AS"/>
</dbReference>
<dbReference type="InterPro" id="IPR033644">
    <property type="entry name" value="Ferrochelatase_C"/>
</dbReference>
<dbReference type="InterPro" id="IPR033659">
    <property type="entry name" value="Ferrochelatase_N"/>
</dbReference>
<dbReference type="NCBIfam" id="TIGR00109">
    <property type="entry name" value="hemH"/>
    <property type="match status" value="1"/>
</dbReference>
<dbReference type="PANTHER" id="PTHR11108">
    <property type="entry name" value="FERROCHELATASE"/>
    <property type="match status" value="1"/>
</dbReference>
<dbReference type="PANTHER" id="PTHR11108:SF1">
    <property type="entry name" value="FERROCHELATASE, MITOCHONDRIAL"/>
    <property type="match status" value="1"/>
</dbReference>
<dbReference type="Pfam" id="PF00762">
    <property type="entry name" value="Ferrochelatase"/>
    <property type="match status" value="1"/>
</dbReference>
<dbReference type="SUPFAM" id="SSF53800">
    <property type="entry name" value="Chelatase"/>
    <property type="match status" value="1"/>
</dbReference>
<dbReference type="PROSITE" id="PS00534">
    <property type="entry name" value="FERROCHELATASE"/>
    <property type="match status" value="1"/>
</dbReference>
<protein>
    <recommendedName>
        <fullName evidence="1">Ferrochelatase</fullName>
        <ecNumber evidence="1">4.98.1.1</ecNumber>
    </recommendedName>
    <alternativeName>
        <fullName evidence="1">Heme synthase</fullName>
    </alternativeName>
    <alternativeName>
        <fullName evidence="1">Protoheme ferro-lyase</fullName>
    </alternativeName>
</protein>
<evidence type="ECO:0000255" key="1">
    <source>
        <dbReference type="HAMAP-Rule" id="MF_00323"/>
    </source>
</evidence>
<sequence>MMAEKHGVLLVNLGTPSAATPAAVKAYLAEFLSDRRVVDLPSWQWQPLLRGLILPRRAPRVARLYQSIWTAQGSPLLYYSQRLCDGLQARLGEAIPVVLGMSYGEPSLDRALSALSDAGVTQLTVVPLYPQYSCSTSAAVFDGVAAWLARQRCIPALRFVRDYAQHPAYIAALCQRIRCSIAEHGQPDILLFSYHGIPQRYAAEGDDYPQRCLATTQAVVQALGLMPSQYAVSFQSRFGREPWLTPYTDETVVALATGGVRHLQVICPGFAADCLETLEEIAVQNREAFLAAGGHHFAYIPALNDDDMQITLLQQLVAATPA</sequence>
<reference key="1">
    <citation type="submission" date="2009-03" db="EMBL/GenBank/DDBJ databases">
        <title>Complete genome sequence of Edwardsiella ictaluri 93-146.</title>
        <authorList>
            <person name="Williams M.L."/>
            <person name="Gillaspy A.F."/>
            <person name="Dyer D.W."/>
            <person name="Thune R.L."/>
            <person name="Waldbieser G.C."/>
            <person name="Schuster S.C."/>
            <person name="Gipson J."/>
            <person name="Zaitshik J."/>
            <person name="Landry C."/>
            <person name="Lawrence M.L."/>
        </authorList>
    </citation>
    <scope>NUCLEOTIDE SEQUENCE [LARGE SCALE GENOMIC DNA]</scope>
    <source>
        <strain>93-146</strain>
    </source>
</reference>